<sequence>MRLFLSLLVVVLSMVLKGPTPAQGVPDVSNPFDVLEEFGKTLEDNVGEFINLITQSELPAKTRDWFSETFRKVKEKLRINS</sequence>
<gene>
    <name type="primary">APOC1A</name>
</gene>
<dbReference type="EMBL" id="JH292475">
    <property type="protein sequence ID" value="EHH25653.1"/>
    <property type="molecule type" value="Genomic_DNA"/>
</dbReference>
<dbReference type="SMR" id="G8F204"/>
<dbReference type="InParanoid" id="G8F204"/>
<dbReference type="Proteomes" id="UP000006718">
    <property type="component" value="Unassembled WGS sequence"/>
</dbReference>
<dbReference type="Proteomes" id="UP000013456">
    <property type="component" value="Unassembled WGS sequence"/>
</dbReference>
<dbReference type="GO" id="GO:0034364">
    <property type="term" value="C:high-density lipoprotein particle"/>
    <property type="evidence" value="ECO:0000318"/>
    <property type="project" value="GO_Central"/>
</dbReference>
<dbReference type="GO" id="GO:0034361">
    <property type="term" value="C:very-low-density lipoprotein particle"/>
    <property type="evidence" value="ECO:0000318"/>
    <property type="project" value="GO_Central"/>
</dbReference>
<dbReference type="GO" id="GO:0005504">
    <property type="term" value="F:fatty acid binding"/>
    <property type="evidence" value="ECO:0000318"/>
    <property type="project" value="GO_Central"/>
</dbReference>
<dbReference type="GO" id="GO:0004859">
    <property type="term" value="F:phospholipase inhibitor activity"/>
    <property type="evidence" value="ECO:0000318"/>
    <property type="project" value="GO_Central"/>
</dbReference>
<dbReference type="GO" id="GO:0006869">
    <property type="term" value="P:lipid transport"/>
    <property type="evidence" value="ECO:0007669"/>
    <property type="project" value="UniProtKB-KW"/>
</dbReference>
<dbReference type="GO" id="GO:0042157">
    <property type="term" value="P:lipoprotein metabolic process"/>
    <property type="evidence" value="ECO:0007669"/>
    <property type="project" value="InterPro"/>
</dbReference>
<dbReference type="GO" id="GO:0032375">
    <property type="term" value="P:negative regulation of cholesterol transport"/>
    <property type="evidence" value="ECO:0000318"/>
    <property type="project" value="GO_Central"/>
</dbReference>
<dbReference type="GO" id="GO:0050995">
    <property type="term" value="P:negative regulation of lipid catabolic process"/>
    <property type="evidence" value="ECO:0000318"/>
    <property type="project" value="GO_Central"/>
</dbReference>
<dbReference type="GO" id="GO:0010916">
    <property type="term" value="P:negative regulation of very-low-density lipoprotein particle clearance"/>
    <property type="evidence" value="ECO:0000318"/>
    <property type="project" value="GO_Central"/>
</dbReference>
<dbReference type="GO" id="GO:0006641">
    <property type="term" value="P:triglyceride metabolic process"/>
    <property type="evidence" value="ECO:0000318"/>
    <property type="project" value="GO_Central"/>
</dbReference>
<dbReference type="GO" id="GO:0034447">
    <property type="term" value="P:very-low-density lipoprotein particle clearance"/>
    <property type="evidence" value="ECO:0000318"/>
    <property type="project" value="GO_Central"/>
</dbReference>
<dbReference type="Gene3D" id="4.10.260.30">
    <property type="entry name" value="Apolipoprotein C-I"/>
    <property type="match status" value="1"/>
</dbReference>
<dbReference type="InterPro" id="IPR043081">
    <property type="entry name" value="ApoC-1_sf"/>
</dbReference>
<dbReference type="InterPro" id="IPR006781">
    <property type="entry name" value="ApoC-I"/>
</dbReference>
<dbReference type="PANTHER" id="PTHR16565">
    <property type="entry name" value="APOLIPOPROTEIN C-I"/>
    <property type="match status" value="1"/>
</dbReference>
<dbReference type="PANTHER" id="PTHR16565:SF3">
    <property type="entry name" value="APOLIPOPROTEIN C-I, ACIDIC FORM"/>
    <property type="match status" value="1"/>
</dbReference>
<dbReference type="Pfam" id="PF04691">
    <property type="entry name" value="ApoC-I"/>
    <property type="match status" value="1"/>
</dbReference>
<feature type="signal peptide" evidence="3">
    <location>
        <begin position="1"/>
        <end position="24"/>
    </location>
</feature>
<feature type="chain" id="PRO_5003509369" description="Apolipoprotein C-I, acidic form">
    <location>
        <begin position="25"/>
        <end position="81"/>
    </location>
</feature>
<feature type="chain" id="PRO_0000436810" description="Truncated apolipoprotein C-I, acidic form" evidence="2">
    <location>
        <begin position="27"/>
        <end position="81"/>
    </location>
</feature>
<reference key="1">
    <citation type="journal article" date="2011" name="Nat. Biotechnol.">
        <title>Genome sequencing and comparison of two nonhuman primate animal models, the cynomolgus and Chinese rhesus macaques.</title>
        <authorList>
            <person name="Yan G."/>
            <person name="Zhang G."/>
            <person name="Fang X."/>
            <person name="Zhang Y."/>
            <person name="Li C."/>
            <person name="Ling F."/>
            <person name="Cooper D.N."/>
            <person name="Li Q."/>
            <person name="Li Y."/>
            <person name="van Gool A.J."/>
            <person name="Du H."/>
            <person name="Chen J."/>
            <person name="Chen R."/>
            <person name="Zhang P."/>
            <person name="Huang Z."/>
            <person name="Thompson J.R."/>
            <person name="Meng Y."/>
            <person name="Bai Y."/>
            <person name="Wang J."/>
            <person name="Zhuo M."/>
            <person name="Wang T."/>
            <person name="Huang Y."/>
            <person name="Wei L."/>
            <person name="Li J."/>
            <person name="Wang Z."/>
            <person name="Hu H."/>
            <person name="Yang P."/>
            <person name="Le L."/>
            <person name="Stenson P.D."/>
            <person name="Li B."/>
            <person name="Liu X."/>
            <person name="Ball E.V."/>
            <person name="An N."/>
            <person name="Huang Q."/>
            <person name="Zhang Y."/>
            <person name="Fan W."/>
            <person name="Zhang X."/>
            <person name="Li Y."/>
            <person name="Wang W."/>
            <person name="Katze M.G."/>
            <person name="Su B."/>
            <person name="Nielsen R."/>
            <person name="Yang H."/>
            <person name="Wang J."/>
            <person name="Wang X."/>
            <person name="Wang J."/>
        </authorList>
    </citation>
    <scope>NUCLEOTIDE SEQUENCE [LARGE SCALE GENOMIC DNA]</scope>
</reference>
<reference key="2">
    <citation type="journal article" date="2013" name="Front. Biol.">
        <title>Proteogenomic Review of the Changes in Primate apoC-I during Evolution.</title>
        <authorList>
            <person name="Puppione D."/>
            <person name="Whitelegge J.P."/>
        </authorList>
    </citation>
    <scope>REVIEW</scope>
</reference>
<reference key="3">
    <citation type="journal article" date="2014" name="Comp. Biochem. Physiol.">
        <title>Higher primates, but not New World monkeys, have a duplicate set of enhancers flanking their apoC-I genes.</title>
        <authorList>
            <person name="Puppione D.L."/>
        </authorList>
    </citation>
    <scope>GENE DUPLICATION</scope>
</reference>
<protein>
    <recommendedName>
        <fullName>Apolipoprotein C-I, acidic form</fullName>
        <shortName>Apo-CIA</shortName>
        <shortName>ApoC-IA</shortName>
    </recommendedName>
    <alternativeName>
        <fullName>Apolipoprotein C1A</fullName>
    </alternativeName>
    <component>
        <recommendedName>
            <fullName>Truncated apolipoprotein C-I, acidic form</fullName>
            <shortName>Apo-CIA'</shortName>
            <shortName>ApoC-IA'</shortName>
        </recommendedName>
    </component>
</protein>
<accession>G8F204</accession>
<comment type="subcellular location">
    <subcellularLocation>
        <location evidence="1">Secreted</location>
    </subcellularLocation>
</comment>
<comment type="miscellaneous">
    <text evidence="4">Apolipoprotein C-I is present in acidic (APOC1A) and basic (APOC1B) forms in P.paniscus, P.abelii and P.troglodytes and perhaps also in baboons and macaques. The two genes for ApoC-I arose through a duplication process that occurred after the divergence of New World monkeys from the human lineage. In human, the acidic form has become a pseudogene sometime between the divergence of bonobos and chimpanzees from the human lineage and the appearance of the Denisovans. Pseudogenization resulted when the codon for the penultimate amino acid in the signal sequence was changed to a stop codon.</text>
</comment>
<comment type="similarity">
    <text evidence="5">Belongs to the apolipoprotein C1 family.</text>
</comment>
<evidence type="ECO:0000250" key="1">
    <source>
        <dbReference type="UniProtKB" id="P02654"/>
    </source>
</evidence>
<evidence type="ECO:0000250" key="2">
    <source>
        <dbReference type="UniProtKB" id="P86336"/>
    </source>
</evidence>
<evidence type="ECO:0000255" key="3"/>
<evidence type="ECO:0000303" key="4">
    <source>
    </source>
</evidence>
<evidence type="ECO:0000305" key="5"/>
<name>APO1A_MACMU</name>
<keyword id="KW-0445">Lipid transport</keyword>
<keyword id="KW-1185">Reference proteome</keyword>
<keyword id="KW-0964">Secreted</keyword>
<keyword id="KW-0732">Signal</keyword>
<keyword id="KW-0813">Transport</keyword>
<proteinExistence type="inferred from homology"/>
<organism>
    <name type="scientific">Macaca mulatta</name>
    <name type="common">Rhesus macaque</name>
    <dbReference type="NCBI Taxonomy" id="9544"/>
    <lineage>
        <taxon>Eukaryota</taxon>
        <taxon>Metazoa</taxon>
        <taxon>Chordata</taxon>
        <taxon>Craniata</taxon>
        <taxon>Vertebrata</taxon>
        <taxon>Euteleostomi</taxon>
        <taxon>Mammalia</taxon>
        <taxon>Eutheria</taxon>
        <taxon>Euarchontoglires</taxon>
        <taxon>Primates</taxon>
        <taxon>Haplorrhini</taxon>
        <taxon>Catarrhini</taxon>
        <taxon>Cercopithecidae</taxon>
        <taxon>Cercopithecinae</taxon>
        <taxon>Macaca</taxon>
    </lineage>
</organism>